<sequence>MTGTPLLSFEPLTEGILLKRYKRFLADIELEDGSCVTAHCANTGPMTGVLIPGQRVRLRHAPSPTRKLAWTWEQAEVPGADGQLCWVGINTALPNRLIRATIEAGCLREQLGEIESIRAEVVYGKNRKSRIDLLLQPSREAIDQRPIYVEVKNTTWSTGSTALFPDTVTTRGQKHLQELMDVLPEARAVLIPCLSRPDVTAFAPGDSADPRYGELFRNALDAGVEVLPCCFRFDRDGVTWQGTRPAQGQQPSAAL</sequence>
<keyword id="KW-1185">Reference proteome</keyword>
<comment type="similarity">
    <text evidence="1">Belongs to the SfsA family.</text>
</comment>
<organism>
    <name type="scientific">Synechococcus sp. (strain WH7803)</name>
    <dbReference type="NCBI Taxonomy" id="32051"/>
    <lineage>
        <taxon>Bacteria</taxon>
        <taxon>Bacillati</taxon>
        <taxon>Cyanobacteriota</taxon>
        <taxon>Cyanophyceae</taxon>
        <taxon>Synechococcales</taxon>
        <taxon>Synechococcaceae</taxon>
        <taxon>Synechococcus</taxon>
    </lineage>
</organism>
<proteinExistence type="inferred from homology"/>
<accession>A5GIF9</accession>
<dbReference type="EMBL" id="CT971583">
    <property type="protein sequence ID" value="CAK22724.1"/>
    <property type="molecule type" value="Genomic_DNA"/>
</dbReference>
<dbReference type="SMR" id="A5GIF9"/>
<dbReference type="STRING" id="32051.SynWH7803_0298"/>
<dbReference type="KEGG" id="syx:SynWH7803_0298"/>
<dbReference type="eggNOG" id="COG1489">
    <property type="taxonomic scope" value="Bacteria"/>
</dbReference>
<dbReference type="HOGENOM" id="CLU_052299_2_0_3"/>
<dbReference type="OrthoDB" id="9802365at2"/>
<dbReference type="Proteomes" id="UP000001566">
    <property type="component" value="Chromosome"/>
</dbReference>
<dbReference type="GO" id="GO:0003677">
    <property type="term" value="F:DNA binding"/>
    <property type="evidence" value="ECO:0007669"/>
    <property type="project" value="InterPro"/>
</dbReference>
<dbReference type="CDD" id="cd22359">
    <property type="entry name" value="SfsA-like_bacterial"/>
    <property type="match status" value="1"/>
</dbReference>
<dbReference type="Gene3D" id="2.40.50.580">
    <property type="match status" value="1"/>
</dbReference>
<dbReference type="Gene3D" id="3.40.1350.60">
    <property type="match status" value="1"/>
</dbReference>
<dbReference type="HAMAP" id="MF_00095">
    <property type="entry name" value="SfsA"/>
    <property type="match status" value="1"/>
</dbReference>
<dbReference type="InterPro" id="IPR005224">
    <property type="entry name" value="SfsA"/>
</dbReference>
<dbReference type="InterPro" id="IPR040452">
    <property type="entry name" value="SfsA_C"/>
</dbReference>
<dbReference type="InterPro" id="IPR041465">
    <property type="entry name" value="SfsA_N"/>
</dbReference>
<dbReference type="NCBIfam" id="TIGR00230">
    <property type="entry name" value="sfsA"/>
    <property type="match status" value="1"/>
</dbReference>
<dbReference type="PANTHER" id="PTHR30545">
    <property type="entry name" value="SUGAR FERMENTATION STIMULATION PROTEIN A"/>
    <property type="match status" value="1"/>
</dbReference>
<dbReference type="PANTHER" id="PTHR30545:SF2">
    <property type="entry name" value="SUGAR FERMENTATION STIMULATION PROTEIN A"/>
    <property type="match status" value="1"/>
</dbReference>
<dbReference type="Pfam" id="PF03749">
    <property type="entry name" value="SfsA"/>
    <property type="match status" value="1"/>
</dbReference>
<dbReference type="Pfam" id="PF17746">
    <property type="entry name" value="SfsA_N"/>
    <property type="match status" value="1"/>
</dbReference>
<name>SFSA_SYNPW</name>
<feature type="chain" id="PRO_0000340158" description="Sugar fermentation stimulation protein homolog">
    <location>
        <begin position="1"/>
        <end position="255"/>
    </location>
</feature>
<protein>
    <recommendedName>
        <fullName evidence="1">Sugar fermentation stimulation protein homolog</fullName>
    </recommendedName>
</protein>
<evidence type="ECO:0000255" key="1">
    <source>
        <dbReference type="HAMAP-Rule" id="MF_00095"/>
    </source>
</evidence>
<gene>
    <name evidence="1" type="primary">sfsA</name>
    <name type="ordered locus">SynWH7803_0298</name>
</gene>
<reference key="1">
    <citation type="submission" date="2006-05" db="EMBL/GenBank/DDBJ databases">
        <authorList>
            <consortium name="Genoscope"/>
        </authorList>
    </citation>
    <scope>NUCLEOTIDE SEQUENCE [LARGE SCALE GENOMIC DNA]</scope>
    <source>
        <strain>WH7803</strain>
    </source>
</reference>